<gene>
    <name evidence="1" type="primary">ybeY</name>
    <name type="ordered locus">Bcav_1751</name>
</gene>
<accession>C5C494</accession>
<evidence type="ECO:0000255" key="1">
    <source>
        <dbReference type="HAMAP-Rule" id="MF_00009"/>
    </source>
</evidence>
<name>YBEY_BEUC1</name>
<feature type="chain" id="PRO_1000201728" description="Endoribonuclease YbeY">
    <location>
        <begin position="1"/>
        <end position="150"/>
    </location>
</feature>
<feature type="binding site" evidence="1">
    <location>
        <position position="116"/>
    </location>
    <ligand>
        <name>Zn(2+)</name>
        <dbReference type="ChEBI" id="CHEBI:29105"/>
        <note>catalytic</note>
    </ligand>
</feature>
<feature type="binding site" evidence="1">
    <location>
        <position position="120"/>
    </location>
    <ligand>
        <name>Zn(2+)</name>
        <dbReference type="ChEBI" id="CHEBI:29105"/>
        <note>catalytic</note>
    </ligand>
</feature>
<feature type="binding site" evidence="1">
    <location>
        <position position="126"/>
    </location>
    <ligand>
        <name>Zn(2+)</name>
        <dbReference type="ChEBI" id="CHEBI:29105"/>
        <note>catalytic</note>
    </ligand>
</feature>
<proteinExistence type="inferred from homology"/>
<keyword id="KW-0963">Cytoplasm</keyword>
<keyword id="KW-0255">Endonuclease</keyword>
<keyword id="KW-0378">Hydrolase</keyword>
<keyword id="KW-0479">Metal-binding</keyword>
<keyword id="KW-0540">Nuclease</keyword>
<keyword id="KW-1185">Reference proteome</keyword>
<keyword id="KW-0690">Ribosome biogenesis</keyword>
<keyword id="KW-0698">rRNA processing</keyword>
<keyword id="KW-0862">Zinc</keyword>
<dbReference type="EC" id="3.1.-.-" evidence="1"/>
<dbReference type="EMBL" id="CP001618">
    <property type="protein sequence ID" value="ACQ80007.1"/>
    <property type="molecule type" value="Genomic_DNA"/>
</dbReference>
<dbReference type="RefSeq" id="WP_015882247.1">
    <property type="nucleotide sequence ID" value="NC_012669.1"/>
</dbReference>
<dbReference type="SMR" id="C5C494"/>
<dbReference type="STRING" id="471853.Bcav_1751"/>
<dbReference type="KEGG" id="bcv:Bcav_1751"/>
<dbReference type="eggNOG" id="COG0319">
    <property type="taxonomic scope" value="Bacteria"/>
</dbReference>
<dbReference type="HOGENOM" id="CLU_106710_3_2_11"/>
<dbReference type="OrthoDB" id="9807740at2"/>
<dbReference type="Proteomes" id="UP000007962">
    <property type="component" value="Chromosome"/>
</dbReference>
<dbReference type="GO" id="GO:0005737">
    <property type="term" value="C:cytoplasm"/>
    <property type="evidence" value="ECO:0007669"/>
    <property type="project" value="UniProtKB-SubCell"/>
</dbReference>
<dbReference type="GO" id="GO:0004222">
    <property type="term" value="F:metalloendopeptidase activity"/>
    <property type="evidence" value="ECO:0007669"/>
    <property type="project" value="InterPro"/>
</dbReference>
<dbReference type="GO" id="GO:0004521">
    <property type="term" value="F:RNA endonuclease activity"/>
    <property type="evidence" value="ECO:0007669"/>
    <property type="project" value="UniProtKB-UniRule"/>
</dbReference>
<dbReference type="GO" id="GO:0008270">
    <property type="term" value="F:zinc ion binding"/>
    <property type="evidence" value="ECO:0007669"/>
    <property type="project" value="UniProtKB-UniRule"/>
</dbReference>
<dbReference type="GO" id="GO:0006364">
    <property type="term" value="P:rRNA processing"/>
    <property type="evidence" value="ECO:0007669"/>
    <property type="project" value="UniProtKB-UniRule"/>
</dbReference>
<dbReference type="Gene3D" id="3.40.390.30">
    <property type="entry name" value="Metalloproteases ('zincins'), catalytic domain"/>
    <property type="match status" value="1"/>
</dbReference>
<dbReference type="HAMAP" id="MF_00009">
    <property type="entry name" value="Endoribonucl_YbeY"/>
    <property type="match status" value="1"/>
</dbReference>
<dbReference type="InterPro" id="IPR023091">
    <property type="entry name" value="MetalPrtase_cat_dom_sf_prd"/>
</dbReference>
<dbReference type="InterPro" id="IPR002036">
    <property type="entry name" value="YbeY"/>
</dbReference>
<dbReference type="InterPro" id="IPR020549">
    <property type="entry name" value="YbeY_CS"/>
</dbReference>
<dbReference type="NCBIfam" id="TIGR00043">
    <property type="entry name" value="rRNA maturation RNase YbeY"/>
    <property type="match status" value="1"/>
</dbReference>
<dbReference type="PANTHER" id="PTHR46986">
    <property type="entry name" value="ENDORIBONUCLEASE YBEY, CHLOROPLASTIC"/>
    <property type="match status" value="1"/>
</dbReference>
<dbReference type="PANTHER" id="PTHR46986:SF1">
    <property type="entry name" value="ENDORIBONUCLEASE YBEY, CHLOROPLASTIC"/>
    <property type="match status" value="1"/>
</dbReference>
<dbReference type="Pfam" id="PF02130">
    <property type="entry name" value="YbeY"/>
    <property type="match status" value="1"/>
</dbReference>
<dbReference type="SUPFAM" id="SSF55486">
    <property type="entry name" value="Metalloproteases ('zincins'), catalytic domain"/>
    <property type="match status" value="1"/>
</dbReference>
<dbReference type="PROSITE" id="PS01306">
    <property type="entry name" value="UPF0054"/>
    <property type="match status" value="1"/>
</dbReference>
<comment type="function">
    <text evidence="1">Single strand-specific metallo-endoribonuclease involved in late-stage 70S ribosome quality control and in maturation of the 3' terminus of the 16S rRNA.</text>
</comment>
<comment type="cofactor">
    <cofactor evidence="1">
        <name>Zn(2+)</name>
        <dbReference type="ChEBI" id="CHEBI:29105"/>
    </cofactor>
    <text evidence="1">Binds 1 zinc ion.</text>
</comment>
<comment type="subcellular location">
    <subcellularLocation>
        <location evidence="1">Cytoplasm</location>
    </subcellularLocation>
</comment>
<comment type="similarity">
    <text evidence="1">Belongs to the endoribonuclease YbeY family.</text>
</comment>
<reference key="1">
    <citation type="journal article" date="2009" name="Stand. Genomic Sci.">
        <title>Complete genome sequence of Beutenbergia cavernae type strain (HKI 0122).</title>
        <authorList>
            <person name="Land M."/>
            <person name="Pukall R."/>
            <person name="Abt B."/>
            <person name="Goker M."/>
            <person name="Rohde M."/>
            <person name="Glavina Del Rio T."/>
            <person name="Tice H."/>
            <person name="Copeland A."/>
            <person name="Cheng J.F."/>
            <person name="Lucas S."/>
            <person name="Chen F."/>
            <person name="Nolan M."/>
            <person name="Bruce D."/>
            <person name="Goodwin L."/>
            <person name="Pitluck S."/>
            <person name="Ivanova N."/>
            <person name="Mavromatis K."/>
            <person name="Ovchinnikova G."/>
            <person name="Pati A."/>
            <person name="Chen A."/>
            <person name="Palaniappan K."/>
            <person name="Hauser L."/>
            <person name="Chang Y.J."/>
            <person name="Jefferies C.C."/>
            <person name="Saunders E."/>
            <person name="Brettin T."/>
            <person name="Detter J.C."/>
            <person name="Han C."/>
            <person name="Chain P."/>
            <person name="Bristow J."/>
            <person name="Eisen J.A."/>
            <person name="Markowitz V."/>
            <person name="Hugenholtz P."/>
            <person name="Kyrpides N.C."/>
            <person name="Klenk H.P."/>
            <person name="Lapidus A."/>
        </authorList>
    </citation>
    <scope>NUCLEOTIDE SEQUENCE [LARGE SCALE GENOMIC DNA]</scope>
    <source>
        <strain>ATCC BAA-8 / DSM 12333 / CCUG 43141 / JCM 11478 / NBRC 16432 / NCIMB 13614 / HKI 0122</strain>
    </source>
</reference>
<sequence length="150" mass="16596">MSTEVSNESPVTVDEAEFAALARYVLDQLHVHPQAELSILFVDIPAMSDLHERWMDEPGPTDVLSFPMDELRPGRDDAPSGPGVLGDVVLCPEVAAEQARTAGHSTEEELLLLTTHGILHLLGFDHAEPDEEREMFDLQRKLLLTFLAGR</sequence>
<protein>
    <recommendedName>
        <fullName evidence="1">Endoribonuclease YbeY</fullName>
        <ecNumber evidence="1">3.1.-.-</ecNumber>
    </recommendedName>
</protein>
<organism>
    <name type="scientific">Beutenbergia cavernae (strain ATCC BAA-8 / DSM 12333 / CCUG 43141 / JCM 11478 / NBRC 16432 / NCIMB 13614 / HKI 0122)</name>
    <dbReference type="NCBI Taxonomy" id="471853"/>
    <lineage>
        <taxon>Bacteria</taxon>
        <taxon>Bacillati</taxon>
        <taxon>Actinomycetota</taxon>
        <taxon>Actinomycetes</taxon>
        <taxon>Micrococcales</taxon>
        <taxon>Beutenbergiaceae</taxon>
        <taxon>Beutenbergia</taxon>
    </lineage>
</organism>